<feature type="chain" id="PRO_0000385120" description="Uncharacterized protein ORF104">
    <location>
        <begin position="1"/>
        <end position="1203"/>
    </location>
</feature>
<proteinExistence type="predicted"/>
<accession>Q6R7C5</accession>
<organismHost>
    <name type="scientific">Magallana gigas</name>
    <name type="common">Pacific oyster</name>
    <name type="synonym">Crassostrea gigas</name>
    <dbReference type="NCBI Taxonomy" id="29159"/>
</organismHost>
<organismHost>
    <name type="scientific">Pecten maximus</name>
    <name type="common">King scallop</name>
    <name type="synonym">Pilgrim's clam</name>
    <dbReference type="NCBI Taxonomy" id="6579"/>
</organismHost>
<organism>
    <name type="scientific">Ostreid herpesvirus 1 (isolate France)</name>
    <name type="common">OsHV-1</name>
    <name type="synonym">Pacific oyster herpesvirus</name>
    <dbReference type="NCBI Taxonomy" id="654903"/>
    <lineage>
        <taxon>Viruses</taxon>
        <taxon>Duplodnaviria</taxon>
        <taxon>Heunggongvirae</taxon>
        <taxon>Peploviricota</taxon>
        <taxon>Herviviricetes</taxon>
        <taxon>Herpesvirales</taxon>
        <taxon>Malacoherpesviridae</taxon>
        <taxon>Ostreavirus</taxon>
        <taxon>Ostreavirus ostreidmalaco1</taxon>
        <taxon>Ostreid herpesvirus 1</taxon>
    </lineage>
</organism>
<dbReference type="EMBL" id="AY509253">
    <property type="protein sequence ID" value="AAS00990.1"/>
    <property type="molecule type" value="Genomic_DNA"/>
</dbReference>
<dbReference type="RefSeq" id="YP_024643.1">
    <property type="nucleotide sequence ID" value="NC_005881.2"/>
</dbReference>
<dbReference type="KEGG" id="vg:2948169"/>
<dbReference type="Proteomes" id="UP000007021">
    <property type="component" value="Segment"/>
</dbReference>
<keyword id="KW-1185">Reference proteome</keyword>
<reference key="1">
    <citation type="journal article" date="2005" name="J. Gen. Virol.">
        <title>A novel class of herpesvirus with bivalve hosts.</title>
        <authorList>
            <person name="Davison A.J."/>
            <person name="Trus B.L."/>
            <person name="Cheng N."/>
            <person name="Steven A.C."/>
            <person name="Watson M.S."/>
            <person name="Cunningham C."/>
            <person name="Le Deuff R.M."/>
            <person name="Renault T."/>
        </authorList>
    </citation>
    <scope>NUCLEOTIDE SEQUENCE [LARGE SCALE GENOMIC DNA]</scope>
</reference>
<name>Y104_OSHVF</name>
<gene>
    <name type="ORF">ORF104</name>
</gene>
<sequence length="1203" mass="133293">MSFVAPQRGIVTDRVGRNVGNMPNKTSIKPLMREIGRMLVKGNLNGKGPITSETDWETLLNKSGAYNKLFVVSTLMGEGADVANTSDNVRLSYSSTSHNTPLYNEFVQTIVRPAAPMRGGVIEDTTSMITMMREYDKVEPTCMTTLPEIAVDLINKARLNILNENNGYVSESTLSDPTLDAQRRETAMAALQQINAGFSGNVSKMQLALMASIPEQSQAAIEAESIPYELAQVTNELSASIVQNTAQGSIDPIGELRDANHTRSYYEEVASRSLENLFGVSKSVTKGTMGAFFSELMRTNRDFMTNLTTSDNTASGVVVMPADGQPQLPILGTLTVTEDMLPILKPLLARGRRVGAVPLDFHDTTDYYRQYGREMVRYKEEQNRIPTTGAALELLNVVDERNPNVDGSLNKIAPGGNEIFGRKDVDKERDFETNVEAVRSLPVNKDVIYITTQIGTDAEGAIVLNVKREDAMKRSYDLYSDKSASGLKTMHTLMRATVGDNDYKQIMPGAKIFADRMEKKDPGSINAIGKYGTKPVTAHTPDVSTIHHIFGPEEFKLAFLDPSLYDRVGLTERLNDFIKDAERGGSTMGELREMVSNIVTTWKNKVRYASEYYNSAGNNRAEELVSIELSPFFEVAPEGKSASRALFGDIPAWAHNINDHVLTAAMLTPSNYVDEGGLKKIVDDAVKAYKDLERKDTMELVTTLSDPVGEEVKIPDAIGKLADELIKIGKEMYSGMANVDKCIKLDKEIVLSHVVFPMLGGFEFIAQKGAKQKFIVNKAKDGHLLWENNDGVKTYMSFIFAGNAYTILNKMGITSTTTKGLSLLAMLRKTDPIGVAATIAKTYPFGLSADFYRLERMFCNEMILAPPKAIDVIVAPKPVKVTKMGDGSLNFVSSTQLNYVSNMSTATGLRVSNAIAKVRTDNIANMNAKPVIAMDFVTVSEYGNLDRMVDSIATANNIDTDEAKFIKSNLERYEEYRINDFGANQATRMTESYVPLIRPSRQLEPGLLPFLGMARHEALVGPSNGNGFTNFYGKLVTVNPFISNLGSVYQQRFHSSAQTISFDGTHMRFRTSNVNNEGTISETTKLFEEAMVFENLHLIDEQDRRSINKFITFRKGDDSKIIEATKDKLGRLDHREGNLMTRRHLLSTLGYSIPHTQYNSEDLLSIAKEKKKNVMAADGYFTILSPARKDYLGEPTPLFQYLR</sequence>
<protein>
    <recommendedName>
        <fullName>Uncharacterized protein ORF104</fullName>
    </recommendedName>
</protein>